<reference key="1">
    <citation type="online journal article" date="1997" name="Plant Gene Register">
        <title>Isolation of two genes encoding luminal binding protein from Arabidopsis thaliana.</title>
        <authorList>
            <person name="Koizumi N."/>
            <person name="Sano H."/>
        </authorList>
        <locator>PGR97-028</locator>
    </citation>
    <scope>NUCLEOTIDE SEQUENCE [GENOMIC DNA]</scope>
    <source>
        <strain>cv. Columbia</strain>
    </source>
</reference>
<reference key="2">
    <citation type="journal article" date="2000" name="Nature">
        <title>Sequence and analysis of chromosome 5 of the plant Arabidopsis thaliana.</title>
        <authorList>
            <person name="Tabata S."/>
            <person name="Kaneko T."/>
            <person name="Nakamura Y."/>
            <person name="Kotani H."/>
            <person name="Kato T."/>
            <person name="Asamizu E."/>
            <person name="Miyajima N."/>
            <person name="Sasamoto S."/>
            <person name="Kimura T."/>
            <person name="Hosouchi T."/>
            <person name="Kawashima K."/>
            <person name="Kohara M."/>
            <person name="Matsumoto M."/>
            <person name="Matsuno A."/>
            <person name="Muraki A."/>
            <person name="Nakayama S."/>
            <person name="Nakazaki N."/>
            <person name="Naruo K."/>
            <person name="Okumura S."/>
            <person name="Shinpo S."/>
            <person name="Takeuchi C."/>
            <person name="Wada T."/>
            <person name="Watanabe A."/>
            <person name="Yamada M."/>
            <person name="Yasuda M."/>
            <person name="Sato S."/>
            <person name="de la Bastide M."/>
            <person name="Huang E."/>
            <person name="Spiegel L."/>
            <person name="Gnoj L."/>
            <person name="O'Shaughnessy A."/>
            <person name="Preston R."/>
            <person name="Habermann K."/>
            <person name="Murray J."/>
            <person name="Johnson D."/>
            <person name="Rohlfing T."/>
            <person name="Nelson J."/>
            <person name="Stoneking T."/>
            <person name="Pepin K."/>
            <person name="Spieth J."/>
            <person name="Sekhon M."/>
            <person name="Armstrong J."/>
            <person name="Becker M."/>
            <person name="Belter E."/>
            <person name="Cordum H."/>
            <person name="Cordes M."/>
            <person name="Courtney L."/>
            <person name="Courtney W."/>
            <person name="Dante M."/>
            <person name="Du H."/>
            <person name="Edwards J."/>
            <person name="Fryman J."/>
            <person name="Haakensen B."/>
            <person name="Lamar E."/>
            <person name="Latreille P."/>
            <person name="Leonard S."/>
            <person name="Meyer R."/>
            <person name="Mulvaney E."/>
            <person name="Ozersky P."/>
            <person name="Riley A."/>
            <person name="Strowmatt C."/>
            <person name="Wagner-McPherson C."/>
            <person name="Wollam A."/>
            <person name="Yoakum M."/>
            <person name="Bell M."/>
            <person name="Dedhia N."/>
            <person name="Parnell L."/>
            <person name="Shah R."/>
            <person name="Rodriguez M."/>
            <person name="Hoon See L."/>
            <person name="Vil D."/>
            <person name="Baker J."/>
            <person name="Kirchoff K."/>
            <person name="Toth K."/>
            <person name="King L."/>
            <person name="Bahret A."/>
            <person name="Miller B."/>
            <person name="Marra M.A."/>
            <person name="Martienssen R."/>
            <person name="McCombie W.R."/>
            <person name="Wilson R.K."/>
            <person name="Murphy G."/>
            <person name="Bancroft I."/>
            <person name="Volckaert G."/>
            <person name="Wambutt R."/>
            <person name="Duesterhoeft A."/>
            <person name="Stiekema W."/>
            <person name="Pohl T."/>
            <person name="Entian K.-D."/>
            <person name="Terryn N."/>
            <person name="Hartley N."/>
            <person name="Bent E."/>
            <person name="Johnson S."/>
            <person name="Langham S.-A."/>
            <person name="McCullagh B."/>
            <person name="Robben J."/>
            <person name="Grymonprez B."/>
            <person name="Zimmermann W."/>
            <person name="Ramsperger U."/>
            <person name="Wedler H."/>
            <person name="Balke K."/>
            <person name="Wedler E."/>
            <person name="Peters S."/>
            <person name="van Staveren M."/>
            <person name="Dirkse W."/>
            <person name="Mooijman P."/>
            <person name="Klein Lankhorst R."/>
            <person name="Weitzenegger T."/>
            <person name="Bothe G."/>
            <person name="Rose M."/>
            <person name="Hauf J."/>
            <person name="Berneiser S."/>
            <person name="Hempel S."/>
            <person name="Feldpausch M."/>
            <person name="Lamberth S."/>
            <person name="Villarroel R."/>
            <person name="Gielen J."/>
            <person name="Ardiles W."/>
            <person name="Bents O."/>
            <person name="Lemcke K."/>
            <person name="Kolesov G."/>
            <person name="Mayer K.F.X."/>
            <person name="Rudd S."/>
            <person name="Schoof H."/>
            <person name="Schueller C."/>
            <person name="Zaccaria P."/>
            <person name="Mewes H.-W."/>
            <person name="Bevan M."/>
            <person name="Fransz P.F."/>
        </authorList>
    </citation>
    <scope>NUCLEOTIDE SEQUENCE [LARGE SCALE GENOMIC DNA]</scope>
    <source>
        <strain>cv. Columbia</strain>
    </source>
</reference>
<reference key="3">
    <citation type="journal article" date="2017" name="Plant J.">
        <title>Araport11: a complete reannotation of the Arabidopsis thaliana reference genome.</title>
        <authorList>
            <person name="Cheng C.Y."/>
            <person name="Krishnakumar V."/>
            <person name="Chan A.P."/>
            <person name="Thibaud-Nissen F."/>
            <person name="Schobel S."/>
            <person name="Town C.D."/>
        </authorList>
    </citation>
    <scope>GENOME REANNOTATION</scope>
    <source>
        <strain>cv. Columbia</strain>
    </source>
</reference>
<reference key="4">
    <citation type="journal article" date="2003" name="Science">
        <title>Empirical analysis of transcriptional activity in the Arabidopsis genome.</title>
        <authorList>
            <person name="Yamada K."/>
            <person name="Lim J."/>
            <person name="Dale J.M."/>
            <person name="Chen H."/>
            <person name="Shinn P."/>
            <person name="Palm C.J."/>
            <person name="Southwick A.M."/>
            <person name="Wu H.C."/>
            <person name="Kim C.J."/>
            <person name="Nguyen M."/>
            <person name="Pham P.K."/>
            <person name="Cheuk R.F."/>
            <person name="Karlin-Newmann G."/>
            <person name="Liu S.X."/>
            <person name="Lam B."/>
            <person name="Sakano H."/>
            <person name="Wu T."/>
            <person name="Yu G."/>
            <person name="Miranda M."/>
            <person name="Quach H.L."/>
            <person name="Tripp M."/>
            <person name="Chang C.H."/>
            <person name="Lee J.M."/>
            <person name="Toriumi M.J."/>
            <person name="Chan M.M."/>
            <person name="Tang C.C."/>
            <person name="Onodera C.S."/>
            <person name="Deng J.M."/>
            <person name="Akiyama K."/>
            <person name="Ansari Y."/>
            <person name="Arakawa T."/>
            <person name="Banh J."/>
            <person name="Banno F."/>
            <person name="Bowser L."/>
            <person name="Brooks S.Y."/>
            <person name="Carninci P."/>
            <person name="Chao Q."/>
            <person name="Choy N."/>
            <person name="Enju A."/>
            <person name="Goldsmith A.D."/>
            <person name="Gurjal M."/>
            <person name="Hansen N.F."/>
            <person name="Hayashizaki Y."/>
            <person name="Johnson-Hopson C."/>
            <person name="Hsuan V.W."/>
            <person name="Iida K."/>
            <person name="Karnes M."/>
            <person name="Khan S."/>
            <person name="Koesema E."/>
            <person name="Ishida J."/>
            <person name="Jiang P.X."/>
            <person name="Jones T."/>
            <person name="Kawai J."/>
            <person name="Kamiya A."/>
            <person name="Meyers C."/>
            <person name="Nakajima M."/>
            <person name="Narusaka M."/>
            <person name="Seki M."/>
            <person name="Sakurai T."/>
            <person name="Satou M."/>
            <person name="Tamse R."/>
            <person name="Vaysberg M."/>
            <person name="Wallender E.K."/>
            <person name="Wong C."/>
            <person name="Yamamura Y."/>
            <person name="Yuan S."/>
            <person name="Shinozaki K."/>
            <person name="Davis R.W."/>
            <person name="Theologis A."/>
            <person name="Ecker J.R."/>
        </authorList>
    </citation>
    <scope>NUCLEOTIDE SEQUENCE [LARGE SCALE MRNA]</scope>
    <source>
        <strain>cv. Columbia</strain>
    </source>
</reference>
<reference key="5">
    <citation type="submission" date="2005-03" db="EMBL/GenBank/DDBJ databases">
        <title>Large-scale analysis of RIKEN Arabidopsis full-length (RAFL) cDNAs.</title>
        <authorList>
            <person name="Totoki Y."/>
            <person name="Seki M."/>
            <person name="Ishida J."/>
            <person name="Nakajima M."/>
            <person name="Enju A."/>
            <person name="Kamiya A."/>
            <person name="Narusaka M."/>
            <person name="Shin-i T."/>
            <person name="Nakagawa M."/>
            <person name="Sakamoto N."/>
            <person name="Oishi K."/>
            <person name="Kohara Y."/>
            <person name="Kobayashi M."/>
            <person name="Toyoda A."/>
            <person name="Sakaki Y."/>
            <person name="Sakurai T."/>
            <person name="Iida K."/>
            <person name="Akiyama K."/>
            <person name="Satou M."/>
            <person name="Toyoda T."/>
            <person name="Konagaya A."/>
            <person name="Carninci P."/>
            <person name="Kawai J."/>
            <person name="Hayashizaki Y."/>
            <person name="Shinozaki K."/>
        </authorList>
    </citation>
    <scope>NUCLEOTIDE SEQUENCE [LARGE SCALE MRNA] OF 537-669</scope>
    <source>
        <strain>cv. Columbia</strain>
    </source>
</reference>
<reference key="6">
    <citation type="journal article" date="1993" name="Plant J.">
        <title>An inventory of 1152 expressed sequence tags obtained by partial sequencing of cDNAs from Arabidopsis thaliana.</title>
        <authorList>
            <person name="Hoefte H."/>
            <person name="Desprez T."/>
            <person name="Amselem J."/>
            <person name="Chiapello H."/>
            <person name="Rouze P."/>
            <person name="Caboche M."/>
            <person name="Moisan A."/>
            <person name="Jourjon M.-F."/>
            <person name="Charpenteau J.-L."/>
            <person name="Berthomieu P."/>
            <person name="Guerrier D."/>
            <person name="Giraudat J."/>
            <person name="Quigley F."/>
            <person name="Thomas F."/>
            <person name="Yu D.-Y."/>
            <person name="Mache R."/>
            <person name="Raynal M."/>
            <person name="Cooke R."/>
            <person name="Grellet F."/>
            <person name="Delseny M."/>
            <person name="Parmentier Y."/>
            <person name="de Marcillac G."/>
            <person name="Gigot C."/>
            <person name="Fleck J."/>
            <person name="Philipps G."/>
            <person name="Axelos M."/>
            <person name="Bardet C."/>
            <person name="Tremousaygue D."/>
            <person name="Lescure B."/>
        </authorList>
    </citation>
    <scope>NUCLEOTIDE SEQUENCE [LARGE SCALE MRNA] OF 620-669</scope>
    <source>
        <strain>cv. Columbia</strain>
        <tissue>Green siliques</tissue>
    </source>
</reference>
<reference key="7">
    <citation type="journal article" date="2001" name="Cell Stress Chaperones">
        <title>Genomic analysis of the Hsp70 superfamily in Arabidopsis thaliana.</title>
        <authorList>
            <person name="Lin B.L."/>
            <person name="Wang J.S."/>
            <person name="Liu H.C."/>
            <person name="Chen R.W."/>
            <person name="Meyer Y."/>
            <person name="Barakat A."/>
            <person name="Delseny M."/>
        </authorList>
    </citation>
    <scope>GENE FAMILY</scope>
    <scope>NOMENCLATURE</scope>
</reference>
<reference key="8">
    <citation type="journal article" date="2001" name="Plant Physiol.">
        <title>Comprehensive expression profile analysis of the Arabidopsis Hsp70 gene family.</title>
        <authorList>
            <person name="Sung D.Y."/>
            <person name="Vierling E."/>
            <person name="Guy C.L."/>
        </authorList>
    </citation>
    <scope>DNAK GENE SUBFAMILY</scope>
    <scope>INDUCTION</scope>
    <scope>DEVELOPMENTAL STAGE</scope>
</reference>
<reference key="9">
    <citation type="journal article" date="2007" name="Mol. Cell">
        <title>Purification of a plant mediator from Arabidopsis thaliana identifies PFT1 as the Med25 subunit.</title>
        <authorList>
            <person name="Baeckstroem S."/>
            <person name="Elfving N."/>
            <person name="Nilsson R."/>
            <person name="Wingsle G."/>
            <person name="Bjoerklund S."/>
        </authorList>
    </citation>
    <scope>IDENTIFICATION BY MASS SPECTROMETRY</scope>
</reference>
<reference key="10">
    <citation type="journal article" date="2007" name="Mol. Cell. Proteomics">
        <title>Multidimensional protein identification technology (MudPIT) analysis of ubiquitinated proteins in plants.</title>
        <authorList>
            <person name="Maor R."/>
            <person name="Jones A."/>
            <person name="Nuehse T.S."/>
            <person name="Studholme D.J."/>
            <person name="Peck S.C."/>
            <person name="Shirasu K."/>
        </authorList>
    </citation>
    <scope>IDENTIFICATION BY MASS SPECTROMETRY [LARGE SCALE ANALYSIS]</scope>
    <source>
        <strain>cv. Landsberg erecta</strain>
    </source>
</reference>
<reference key="11">
    <citation type="journal article" date="2009" name="EMBO J.">
        <title>Control of the pattern-recognition receptor EFR by an ER protein complex in plant immunity.</title>
        <authorList>
            <person name="Nekrasov V."/>
            <person name="Li J."/>
            <person name="Batoux M."/>
            <person name="Roux M."/>
            <person name="Chu Z.H."/>
            <person name="Lacombe S."/>
            <person name="Rougon A."/>
            <person name="Bittel P."/>
            <person name="Kiss-Papp M."/>
            <person name="Chinchilla D."/>
            <person name="van Esse H.P."/>
            <person name="Jorda L."/>
            <person name="Schwessinger B."/>
            <person name="Nicaise V."/>
            <person name="Thomma B.P."/>
            <person name="Molina A."/>
            <person name="Jones J.D."/>
            <person name="Zipfel C."/>
        </authorList>
    </citation>
    <scope>INTERACTION WITH ERDJ3B</scope>
</reference>
<reference key="12">
    <citation type="journal article" date="2010" name="Proc. Natl. Acad. Sci. U.S.A.">
        <title>BiP-mediated polar nuclei fusion is essential for the regulation of endosperm nuclei proliferation in Arabidopsis thaliana.</title>
        <authorList>
            <person name="Maruyama D."/>
            <person name="Endo T."/>
            <person name="Nishikawa S."/>
        </authorList>
    </citation>
    <scope>FUNCTION</scope>
    <scope>DISRUPTION PHENOTYPE</scope>
</reference>
<reference key="13">
    <citation type="journal article" date="2011" name="Mol. Cells">
        <title>Protein disulfide isomerase-2 of Arabidopsis mediates protein folding and localizes to both the secretory pathway and nucleus, where it interacts with maternal effect embryo arrest factor.</title>
        <authorList>
            <person name="Cho E.J."/>
            <person name="Yuen C.Y."/>
            <person name="Kang B.H."/>
            <person name="Ondzighi C.A."/>
            <person name="Staehelin L.A."/>
            <person name="Christopher D.A."/>
        </authorList>
    </citation>
    <scope>INTERACTION WITH PDIL1-4</scope>
</reference>
<reference key="14">
    <citation type="journal article" date="2011" name="Plant Physiol.">
        <title>The Mediator complex in plants: structure, phylogeny, and expression profiling of representative genes in a dicot (Arabidopsis) and a monocot (rice) during reproduction and abiotic stress.</title>
        <authorList>
            <person name="Mathur S."/>
            <person name="Vyas S."/>
            <person name="Kapoor S."/>
            <person name="Tyagi A.K."/>
        </authorList>
    </citation>
    <scope>NOMENCLATURE</scope>
</reference>
<reference key="15">
    <citation type="journal article" date="2013" name="Plant Cell">
        <title>BINDING PROTEIN is a master regulator of the endoplasmic reticulum stress sensor/transducer bZIP28 in Arabidopsis.</title>
        <authorList>
            <person name="Srivastava R."/>
            <person name="Deng Y."/>
            <person name="Shah S."/>
            <person name="Rao A.G."/>
            <person name="Howell S.H."/>
        </authorList>
    </citation>
    <scope>INTERACTION WITH BZIP28</scope>
    <scope>SUBCELLULAR LOCATION</scope>
</reference>
<reference key="16">
    <citation type="journal article" date="2014" name="Plant Cell Physiol.">
        <title>Multiple BiP genes of Arabidopsis thaliana are required for male gametogenesis and pollen competitiveness.</title>
        <authorList>
            <person name="Maruyama D."/>
            <person name="Sugiyama T."/>
            <person name="Endo T."/>
            <person name="Nishikawa S."/>
        </authorList>
    </citation>
    <scope>FUNCTION</scope>
    <scope>TISSUE SPECIFICITY</scope>
    <scope>DISRUPTION PHENOTYPE</scope>
</reference>
<reference key="17">
    <citation type="journal article" date="2015" name="PLoS ONE">
        <title>The THERMOSENSITIVE MALE STERILE 1 interacts with the BiPs via DnaJ domain and stimulates their ATPase enzyme activities in Arabidopsis.</title>
        <authorList>
            <person name="Ma Z.X."/>
            <person name="Leng Y.J."/>
            <person name="Chen G.X."/>
            <person name="Zhou P.M."/>
            <person name="Ye D."/>
            <person name="Chen L.Q."/>
        </authorList>
    </citation>
    <scope>FUNCTION</scope>
    <scope>ACTIVITY REGULATION</scope>
    <scope>INTERACTION WITH ERDJ3A</scope>
    <scope>INDUCTION BY DTT</scope>
</reference>
<reference key="18">
    <citation type="journal article" date="2015" name="Plant Signal. Behav.">
        <title>BiP3 supports the early stages of female gametogenesis in the absence of BiP1 and BiP2 in Arabidopsis thaliana.</title>
        <authorList>
            <person name="Maruyama D."/>
            <person name="Endo T."/>
            <person name="Nishikawa S."/>
        </authorList>
    </citation>
    <scope>DISRUPTION PHENOTYPE</scope>
</reference>
<reference key="19">
    <citation type="journal article" date="2020" name="Plant Cell Physiol.">
        <title>Fertilization-coupled sperm nuclear fusion is required for normal endosperm nuclear proliferation.</title>
        <authorList>
            <person name="Maruyama D."/>
            <person name="Higashiyama T."/>
            <person name="Endo T."/>
            <person name="Nishikawa S.I."/>
        </authorList>
    </citation>
    <scope>FUNCTION</scope>
</reference>
<proteinExistence type="evidence at protein level"/>
<feature type="signal peptide" evidence="1">
    <location>
        <begin position="1"/>
        <end position="27"/>
    </location>
</feature>
<feature type="chain" id="PRO_0000013588" description="Heat shock 70 kDa protein BIP1">
    <location>
        <begin position="28"/>
        <end position="669"/>
    </location>
</feature>
<feature type="region of interest" description="Disordered" evidence="3">
    <location>
        <begin position="642"/>
        <end position="669"/>
    </location>
</feature>
<feature type="short sequence motif" description="Prevents secretion from ER" evidence="2">
    <location>
        <begin position="666"/>
        <end position="669"/>
    </location>
</feature>
<feature type="compositionally biased region" description="Acidic residues" evidence="3">
    <location>
        <begin position="658"/>
        <end position="669"/>
    </location>
</feature>
<feature type="sequence conflict" description="In Ref. 2; BAA13947." evidence="17" ref="2">
    <original>YG</original>
    <variation>NV</variation>
    <location>
        <begin position="215"/>
        <end position="216"/>
    </location>
</feature>
<comment type="function">
    <text evidence="7 10 11 12 18">In cooperation with other chaperones, Hsp70s are key components that facilitate folding of de novo synthesized proteins, assist translocation of precursor proteins into organelles, and are responsible for degradation of damaged protein under stress conditions (Probable). Involved in polar nuclei fusion during female gametophyte development and is essential for the regulation of endosperm nuclei proliferation (PubMed:20080634). Involved in sperm nuclear fusion with central cell polar nuclei at fertilization, which is critical for normal endosperm nuclear proliferation (PubMed:31410484). Required for pollen development and pollen tube growth (PubMed:24486762). Possesses ATPase activity in vitro (PubMed:26186593).</text>
</comment>
<comment type="activity regulation">
    <text evidence="11">Binding to ERDJ3A activates the ATPase activity of BIP1.</text>
</comment>
<comment type="subunit">
    <text evidence="6 8 9 11">Interacts with ERDJ3B (PubMed:19763086). Interacts with PDIL1-4 (PubMed:21909944). Interacts with BZIP28 (via C-terminus) in the endoplasmic reticulum (ER) lumen (PubMed:23624714). Under ER stress, BIP1 dissociates from BZIP28, a transcription factor involved in ER stress responses (PubMed:23624714). Interacts with ERDJ3A (PubMed:26186593).</text>
</comment>
<comment type="subcellular location">
    <subcellularLocation>
        <location evidence="2 9">Endoplasmic reticulum lumen</location>
    </subcellularLocation>
    <subcellularLocation>
        <location evidence="17">Nucleus</location>
    </subcellularLocation>
</comment>
<comment type="tissue specificity">
    <text evidence="10">Expressed in mature pollen grains, and pollen tubes.</text>
</comment>
<comment type="developmental stage">
    <text evidence="4">Down-regulated during seed maturation. Up-regulated during germination.</text>
</comment>
<comment type="induction">
    <text evidence="4 11">Induced by heat shock (PubMed:11402207). Induced by DTT (PubMed:26186593).</text>
</comment>
<comment type="disruption phenotype">
    <text evidence="7 10 11">Bip1 and bip2 double mutation affects the fusion of polar nuclei during female gametophyte development (PubMed:20080634). Bip1 and bip2 double mutation affects pollen tube growth and length (PubMed:24486762). Bip1, bip2 and bip3 triple mutation is pollen lethal (PubMed:24486762). Bip1, bip2 and bip3 triple mutation affects female gametophyte development during the early stages (PubMed:26186593).</text>
</comment>
<comment type="miscellaneous">
    <text evidence="5 17">Baeckstroem et al identified BIP1 in a Mediator complex pull-down assay and suggested that BIP1 could be a plant specific component of the Mediator complex (PubMed:17560376). However, no experimental evidence has been brought so far to confirm this hypothesis (Probable).</text>
</comment>
<comment type="similarity">
    <text evidence="17">Belongs to the heat shock protein 70 (TC 1.A.33) family. DnaK subfamily.</text>
</comment>
<organism>
    <name type="scientific">Arabidopsis thaliana</name>
    <name type="common">Mouse-ear cress</name>
    <dbReference type="NCBI Taxonomy" id="3702"/>
    <lineage>
        <taxon>Eukaryota</taxon>
        <taxon>Viridiplantae</taxon>
        <taxon>Streptophyta</taxon>
        <taxon>Embryophyta</taxon>
        <taxon>Tracheophyta</taxon>
        <taxon>Spermatophyta</taxon>
        <taxon>Magnoliopsida</taxon>
        <taxon>eudicotyledons</taxon>
        <taxon>Gunneridae</taxon>
        <taxon>Pentapetalae</taxon>
        <taxon>rosids</taxon>
        <taxon>malvids</taxon>
        <taxon>Brassicales</taxon>
        <taxon>Brassicaceae</taxon>
        <taxon>Camelineae</taxon>
        <taxon>Arabidopsis</taxon>
    </lineage>
</organism>
<name>BIP1_ARATH</name>
<accession>Q9LKR3</accession>
<accession>Q41928</accession>
<accession>Q56Y82</accession>
<protein>
    <recommendedName>
        <fullName>Heat shock 70 kDa protein BIP1</fullName>
    </recommendedName>
    <alternativeName>
        <fullName evidence="13">Heat shock 70 kDa protein 11</fullName>
    </alternativeName>
    <alternativeName>
        <fullName evidence="13">Heat shock protein 70-11</fullName>
        <shortName evidence="13">AtHsp70-11</shortName>
    </alternativeName>
    <alternativeName>
        <fullName>Luminal-binding protein 1</fullName>
        <shortName evidence="16">AtBP1</shortName>
        <shortName evidence="14">BiP1</shortName>
    </alternativeName>
</protein>
<sequence>MARSFGANSTVVLAIIFFGCLFALSSAIEEATKLGSVIGIDLGTTYSCVGVYKNGHVEIIANDQGNRITPSWVGFTDSERLIGEAAKNQAAVNPERTVFDVKRLIGRKFEDKEVQKDRKLVPYQIVNKDGKPYIQVKIKDGETKVFSPEEISAMILTKMKETAEAYLGKKIKDAVVTVPAYFNDAQRQATKDAGVIAGLNVARIINEPTAAAIAYGLDKKGGEKNILVFDLGGGTFDVSVLTIDNGVFEVLSTNGDTHLGGEDFDHRVMEYFIKLIKKKHQKDISKDNKALGKLRRECERAKRALSSQHQVRVEIESLFDGVDFSEPLTRARFEELNNDLFRKTMGPVKKAMDDAGLQKSQIDEIVLVGGSTRIPKVQQLLKDFFEGKEPNKGVNPDEAVAYGAAVQGGILSGEGGDETKDILLLDVAPLTLGIETVGGVMTKLIPRNTVIPTKKSQVFTTYQDQQTTVSIQVFEGERSLTKDCRLLGKFDLNGIPPAPRGTPQIEVTFEVDANGILNVKAEDKASGKSEKITITNEKGRLSQEEIDRMVKEAEEFAEEDKKVKEKIDARNALETYVYNMKNQVNDKDKLADKLEGDEKEKIEAATKEALEWLDENQNSEKEEYDEKLKEVEAVCNPIITAVYQRSGGAPGGAGGESSTEEEDESHDEL</sequence>
<dbReference type="EMBL" id="D89341">
    <property type="protein sequence ID" value="BAA13947.1"/>
    <property type="molecule type" value="Genomic_DNA"/>
</dbReference>
<dbReference type="EMBL" id="AF262043">
    <property type="protein sequence ID" value="AAF88019.1"/>
    <property type="molecule type" value="Genomic_DNA"/>
</dbReference>
<dbReference type="EMBL" id="CP002688">
    <property type="protein sequence ID" value="AED93812.1"/>
    <property type="molecule type" value="Genomic_DNA"/>
</dbReference>
<dbReference type="EMBL" id="BT000453">
    <property type="protein sequence ID" value="AAN17430.1"/>
    <property type="molecule type" value="mRNA"/>
</dbReference>
<dbReference type="EMBL" id="BT001212">
    <property type="protein sequence ID" value="AAN65099.1"/>
    <property type="molecule type" value="mRNA"/>
</dbReference>
<dbReference type="EMBL" id="AK221441">
    <property type="protein sequence ID" value="BAD94482.1"/>
    <property type="molecule type" value="mRNA"/>
</dbReference>
<dbReference type="EMBL" id="Z17760">
    <property type="protein sequence ID" value="CAA79056.1"/>
    <property type="molecule type" value="mRNA"/>
</dbReference>
<dbReference type="RefSeq" id="NP_198206.1">
    <property type="nucleotide sequence ID" value="NM_122737.4"/>
</dbReference>
<dbReference type="SMR" id="Q9LKR3"/>
<dbReference type="BioGRID" id="18223">
    <property type="interactions" value="32"/>
</dbReference>
<dbReference type="FunCoup" id="Q9LKR3">
    <property type="interactions" value="3078"/>
</dbReference>
<dbReference type="IntAct" id="Q9LKR3">
    <property type="interactions" value="4"/>
</dbReference>
<dbReference type="MINT" id="Q9LKR3"/>
<dbReference type="STRING" id="3702.Q9LKR3"/>
<dbReference type="iPTMnet" id="Q9LKR3"/>
<dbReference type="MetOSite" id="Q9LKR3"/>
<dbReference type="PaxDb" id="3702-AT5G28540.1"/>
<dbReference type="ProteomicsDB" id="238329"/>
<dbReference type="EnsemblPlants" id="AT5G28540.1">
    <property type="protein sequence ID" value="AT5G28540.1"/>
    <property type="gene ID" value="AT5G28540"/>
</dbReference>
<dbReference type="GeneID" id="832950"/>
<dbReference type="Gramene" id="AT5G28540.1">
    <property type="protein sequence ID" value="AT5G28540.1"/>
    <property type="gene ID" value="AT5G28540"/>
</dbReference>
<dbReference type="KEGG" id="ath:AT5G28540"/>
<dbReference type="Araport" id="AT5G28540"/>
<dbReference type="TAIR" id="AT5G28540">
    <property type="gene designation" value="BIP1"/>
</dbReference>
<dbReference type="eggNOG" id="KOG0100">
    <property type="taxonomic scope" value="Eukaryota"/>
</dbReference>
<dbReference type="HOGENOM" id="CLU_005965_2_1_1"/>
<dbReference type="InParanoid" id="Q9LKR3"/>
<dbReference type="OMA" id="GHEVEHA"/>
<dbReference type="OrthoDB" id="1075026at2759"/>
<dbReference type="PhylomeDB" id="Q9LKR3"/>
<dbReference type="CD-CODE" id="4299E36E">
    <property type="entry name" value="Nucleolus"/>
</dbReference>
<dbReference type="PRO" id="PR:Q9LKR3"/>
<dbReference type="Proteomes" id="UP000006548">
    <property type="component" value="Chromosome 5"/>
</dbReference>
<dbReference type="ExpressionAtlas" id="Q9LKR3">
    <property type="expression patterns" value="baseline and differential"/>
</dbReference>
<dbReference type="GO" id="GO:0009507">
    <property type="term" value="C:chloroplast"/>
    <property type="evidence" value="ECO:0007005"/>
    <property type="project" value="TAIR"/>
</dbReference>
<dbReference type="GO" id="GO:0005783">
    <property type="term" value="C:endoplasmic reticulum"/>
    <property type="evidence" value="ECO:0007005"/>
    <property type="project" value="TAIR"/>
</dbReference>
<dbReference type="GO" id="GO:0005788">
    <property type="term" value="C:endoplasmic reticulum lumen"/>
    <property type="evidence" value="ECO:0007669"/>
    <property type="project" value="UniProtKB-SubCell"/>
</dbReference>
<dbReference type="GO" id="GO:0005794">
    <property type="term" value="C:Golgi apparatus"/>
    <property type="evidence" value="ECO:0007005"/>
    <property type="project" value="TAIR"/>
</dbReference>
<dbReference type="GO" id="GO:0016592">
    <property type="term" value="C:mediator complex"/>
    <property type="evidence" value="ECO:0000314"/>
    <property type="project" value="UniProtKB"/>
</dbReference>
<dbReference type="GO" id="GO:0009505">
    <property type="term" value="C:plant-type cell wall"/>
    <property type="evidence" value="ECO:0007005"/>
    <property type="project" value="TAIR"/>
</dbReference>
<dbReference type="GO" id="GO:0000325">
    <property type="term" value="C:plant-type vacuole"/>
    <property type="evidence" value="ECO:0007005"/>
    <property type="project" value="TAIR"/>
</dbReference>
<dbReference type="GO" id="GO:0009506">
    <property type="term" value="C:plasmodesma"/>
    <property type="evidence" value="ECO:0007005"/>
    <property type="project" value="TAIR"/>
</dbReference>
<dbReference type="GO" id="GO:0099503">
    <property type="term" value="C:secretory vesicle"/>
    <property type="evidence" value="ECO:0007005"/>
    <property type="project" value="TAIR"/>
</dbReference>
<dbReference type="GO" id="GO:0005524">
    <property type="term" value="F:ATP binding"/>
    <property type="evidence" value="ECO:0007669"/>
    <property type="project" value="UniProtKB-KW"/>
</dbReference>
<dbReference type="GO" id="GO:0140662">
    <property type="term" value="F:ATP-dependent protein folding chaperone"/>
    <property type="evidence" value="ECO:0007669"/>
    <property type="project" value="InterPro"/>
</dbReference>
<dbReference type="CDD" id="cd10241">
    <property type="entry name" value="ASKHA_NBD_HSP70_BiP"/>
    <property type="match status" value="1"/>
</dbReference>
<dbReference type="FunFam" id="2.60.34.10:FF:000002">
    <property type="entry name" value="Heat shock 70 kDa"/>
    <property type="match status" value="1"/>
</dbReference>
<dbReference type="FunFam" id="3.90.640.10:FF:000002">
    <property type="entry name" value="Heat shock 70 kDa"/>
    <property type="match status" value="1"/>
</dbReference>
<dbReference type="FunFam" id="3.30.30.30:FF:000001">
    <property type="entry name" value="heat shock 70 kDa protein-like"/>
    <property type="match status" value="1"/>
</dbReference>
<dbReference type="FunFam" id="3.30.420.40:FF:000026">
    <property type="entry name" value="Heat shock protein 70"/>
    <property type="match status" value="1"/>
</dbReference>
<dbReference type="FunFam" id="1.20.1270.10:FF:000015">
    <property type="entry name" value="Luminal-binding protein 5"/>
    <property type="match status" value="1"/>
</dbReference>
<dbReference type="Gene3D" id="1.20.1270.10">
    <property type="match status" value="1"/>
</dbReference>
<dbReference type="Gene3D" id="3.30.420.40">
    <property type="match status" value="2"/>
</dbReference>
<dbReference type="Gene3D" id="3.90.640.10">
    <property type="entry name" value="Actin, Chain A, domain 4"/>
    <property type="match status" value="1"/>
</dbReference>
<dbReference type="Gene3D" id="2.60.34.10">
    <property type="entry name" value="Substrate Binding Domain Of DNAk, Chain A, domain 1"/>
    <property type="match status" value="1"/>
</dbReference>
<dbReference type="InterPro" id="IPR043129">
    <property type="entry name" value="ATPase_NBD"/>
</dbReference>
<dbReference type="InterPro" id="IPR042050">
    <property type="entry name" value="BIP_NBD"/>
</dbReference>
<dbReference type="InterPro" id="IPR018181">
    <property type="entry name" value="Heat_shock_70_CS"/>
</dbReference>
<dbReference type="InterPro" id="IPR029048">
    <property type="entry name" value="HSP70_C_sf"/>
</dbReference>
<dbReference type="InterPro" id="IPR029047">
    <property type="entry name" value="HSP70_peptide-bd_sf"/>
</dbReference>
<dbReference type="InterPro" id="IPR013126">
    <property type="entry name" value="Hsp_70_fam"/>
</dbReference>
<dbReference type="NCBIfam" id="NF001413">
    <property type="entry name" value="PRK00290.1"/>
    <property type="match status" value="1"/>
</dbReference>
<dbReference type="PANTHER" id="PTHR19375">
    <property type="entry name" value="HEAT SHOCK PROTEIN 70KDA"/>
    <property type="match status" value="1"/>
</dbReference>
<dbReference type="Pfam" id="PF00012">
    <property type="entry name" value="HSP70"/>
    <property type="match status" value="1"/>
</dbReference>
<dbReference type="PRINTS" id="PR00301">
    <property type="entry name" value="HEATSHOCK70"/>
</dbReference>
<dbReference type="SUPFAM" id="SSF53067">
    <property type="entry name" value="Actin-like ATPase domain"/>
    <property type="match status" value="2"/>
</dbReference>
<dbReference type="SUPFAM" id="SSF100934">
    <property type="entry name" value="Heat shock protein 70kD (HSP70), C-terminal subdomain"/>
    <property type="match status" value="1"/>
</dbReference>
<dbReference type="SUPFAM" id="SSF100920">
    <property type="entry name" value="Heat shock protein 70kD (HSP70), peptide-binding domain"/>
    <property type="match status" value="1"/>
</dbReference>
<dbReference type="PROSITE" id="PS00014">
    <property type="entry name" value="ER_TARGET"/>
    <property type="match status" value="1"/>
</dbReference>
<dbReference type="PROSITE" id="PS00297">
    <property type="entry name" value="HSP70_1"/>
    <property type="match status" value="1"/>
</dbReference>
<dbReference type="PROSITE" id="PS00329">
    <property type="entry name" value="HSP70_2"/>
    <property type="match status" value="1"/>
</dbReference>
<dbReference type="PROSITE" id="PS01036">
    <property type="entry name" value="HSP70_3"/>
    <property type="match status" value="1"/>
</dbReference>
<evidence type="ECO:0000255" key="1"/>
<evidence type="ECO:0000255" key="2">
    <source>
        <dbReference type="PROSITE-ProRule" id="PRU10138"/>
    </source>
</evidence>
<evidence type="ECO:0000256" key="3">
    <source>
        <dbReference type="SAM" id="MobiDB-lite"/>
    </source>
</evidence>
<evidence type="ECO:0000269" key="4">
    <source>
    </source>
</evidence>
<evidence type="ECO:0000269" key="5">
    <source>
    </source>
</evidence>
<evidence type="ECO:0000269" key="6">
    <source>
    </source>
</evidence>
<evidence type="ECO:0000269" key="7">
    <source>
    </source>
</evidence>
<evidence type="ECO:0000269" key="8">
    <source>
    </source>
</evidence>
<evidence type="ECO:0000269" key="9">
    <source>
    </source>
</evidence>
<evidence type="ECO:0000269" key="10">
    <source>
    </source>
</evidence>
<evidence type="ECO:0000269" key="11">
    <source>
    </source>
</evidence>
<evidence type="ECO:0000269" key="12">
    <source>
    </source>
</evidence>
<evidence type="ECO:0000303" key="13">
    <source>
    </source>
</evidence>
<evidence type="ECO:0000303" key="14">
    <source>
    </source>
</evidence>
<evidence type="ECO:0000303" key="15">
    <source>
    </source>
</evidence>
<evidence type="ECO:0000303" key="16">
    <source ref="1"/>
</evidence>
<evidence type="ECO:0000305" key="17"/>
<evidence type="ECO:0000305" key="18">
    <source>
    </source>
</evidence>
<evidence type="ECO:0000312" key="19">
    <source>
        <dbReference type="Araport" id="AT5G28540"/>
    </source>
</evidence>
<evidence type="ECO:0000312" key="20">
    <source>
        <dbReference type="EMBL" id="AAF88019.1"/>
    </source>
</evidence>
<gene>
    <name evidence="14" type="primary">BIP1</name>
    <name evidence="13" type="synonym">HSP70-11</name>
    <name evidence="15" type="synonym">MED37_5</name>
    <name type="synonym">MED37A</name>
    <name evidence="19" type="ordered locus">At5g28540</name>
    <name evidence="20" type="ORF">T26D3.10</name>
    <name type="ORF">T26D3_50</name>
</gene>
<keyword id="KW-0067">ATP-binding</keyword>
<keyword id="KW-0143">Chaperone</keyword>
<keyword id="KW-0256">Endoplasmic reticulum</keyword>
<keyword id="KW-0547">Nucleotide-binding</keyword>
<keyword id="KW-0539">Nucleus</keyword>
<keyword id="KW-1185">Reference proteome</keyword>
<keyword id="KW-0732">Signal</keyword>
<keyword id="KW-0804">Transcription</keyword>
<keyword id="KW-0805">Transcription regulation</keyword>